<sequence>MPKLEVCCYSAECAIEAEQAGADRIELCCAPKEGGLTPSFGTLRAVRDRVALPVHPIIRPRGGDFCYSAAEFEVMLNDVAQVRDMGFPGLVIGLLDADGHVSLARMRRIMHLAGTMDVTFHRAFDMCLNPYQALRQLTDLGVARILSSGQQQSAEAGLALLRELTELSRGPIIMAGACVRLTNLHKFVQSGIQELHSSAGQFFPSGMRYRKAGVSMSADSEADEFSRYRVDSEMVANMKHALTVLPVATRPA</sequence>
<dbReference type="EMBL" id="AP008232">
    <property type="protein sequence ID" value="BAE74526.1"/>
    <property type="molecule type" value="Genomic_DNA"/>
</dbReference>
<dbReference type="RefSeq" id="WP_011411080.1">
    <property type="nucleotide sequence ID" value="NC_007712.1"/>
</dbReference>
<dbReference type="SMR" id="Q2NTJ9"/>
<dbReference type="STRING" id="343509.SG1251"/>
<dbReference type="KEGG" id="sgl:SG1251"/>
<dbReference type="eggNOG" id="COG3142">
    <property type="taxonomic scope" value="Bacteria"/>
</dbReference>
<dbReference type="HOGENOM" id="CLU_050555_3_1_6"/>
<dbReference type="OrthoDB" id="9815677at2"/>
<dbReference type="Proteomes" id="UP000001932">
    <property type="component" value="Chromosome"/>
</dbReference>
<dbReference type="GO" id="GO:0005737">
    <property type="term" value="C:cytoplasm"/>
    <property type="evidence" value="ECO:0007669"/>
    <property type="project" value="UniProtKB-SubCell"/>
</dbReference>
<dbReference type="GO" id="GO:0005507">
    <property type="term" value="F:copper ion binding"/>
    <property type="evidence" value="ECO:0007669"/>
    <property type="project" value="TreeGrafter"/>
</dbReference>
<dbReference type="FunFam" id="3.20.20.380:FF:000001">
    <property type="entry name" value="Copper homeostasis protein CutC"/>
    <property type="match status" value="1"/>
</dbReference>
<dbReference type="Gene3D" id="3.20.20.380">
    <property type="entry name" value="Copper homeostasis (CutC) domain"/>
    <property type="match status" value="1"/>
</dbReference>
<dbReference type="HAMAP" id="MF_00795">
    <property type="entry name" value="CutC"/>
    <property type="match status" value="1"/>
</dbReference>
<dbReference type="InterPro" id="IPR005627">
    <property type="entry name" value="CutC-like"/>
</dbReference>
<dbReference type="InterPro" id="IPR036822">
    <property type="entry name" value="CutC-like_dom_sf"/>
</dbReference>
<dbReference type="NCBIfam" id="NF008603">
    <property type="entry name" value="PRK11572.1"/>
    <property type="match status" value="1"/>
</dbReference>
<dbReference type="PANTHER" id="PTHR12598">
    <property type="entry name" value="COPPER HOMEOSTASIS PROTEIN CUTC"/>
    <property type="match status" value="1"/>
</dbReference>
<dbReference type="PANTHER" id="PTHR12598:SF0">
    <property type="entry name" value="COPPER HOMEOSTASIS PROTEIN CUTC HOMOLOG"/>
    <property type="match status" value="1"/>
</dbReference>
<dbReference type="Pfam" id="PF03932">
    <property type="entry name" value="CutC"/>
    <property type="match status" value="1"/>
</dbReference>
<dbReference type="SUPFAM" id="SSF110395">
    <property type="entry name" value="CutC-like"/>
    <property type="match status" value="1"/>
</dbReference>
<feature type="chain" id="PRO_1000046945" description="PF03932 family protein CutC">
    <location>
        <begin position="1"/>
        <end position="252"/>
    </location>
</feature>
<proteinExistence type="inferred from homology"/>
<gene>
    <name evidence="1" type="primary">cutC</name>
    <name type="ordered locus">SG1251</name>
</gene>
<evidence type="ECO:0000255" key="1">
    <source>
        <dbReference type="HAMAP-Rule" id="MF_00795"/>
    </source>
</evidence>
<accession>Q2NTJ9</accession>
<reference key="1">
    <citation type="journal article" date="2006" name="Genome Res.">
        <title>Massive genome erosion and functional adaptations provide insights into the symbiotic lifestyle of Sodalis glossinidius in the tsetse host.</title>
        <authorList>
            <person name="Toh H."/>
            <person name="Weiss B.L."/>
            <person name="Perkin S.A.H."/>
            <person name="Yamashita A."/>
            <person name="Oshima K."/>
            <person name="Hattori M."/>
            <person name="Aksoy S."/>
        </authorList>
    </citation>
    <scope>NUCLEOTIDE SEQUENCE [LARGE SCALE GENOMIC DNA]</scope>
    <source>
        <strain>morsitans</strain>
    </source>
</reference>
<comment type="subcellular location">
    <subcellularLocation>
        <location evidence="1">Cytoplasm</location>
    </subcellularLocation>
</comment>
<comment type="similarity">
    <text evidence="1">Belongs to the CutC family.</text>
</comment>
<comment type="caution">
    <text evidence="1">Once thought to be involved in copper homeostasis, experiments in E.coli have shown this is not the case.</text>
</comment>
<protein>
    <recommendedName>
        <fullName evidence="1">PF03932 family protein CutC</fullName>
    </recommendedName>
</protein>
<keyword id="KW-0963">Cytoplasm</keyword>
<name>CUTC_SODGM</name>
<organism>
    <name type="scientific">Sodalis glossinidius (strain morsitans)</name>
    <dbReference type="NCBI Taxonomy" id="343509"/>
    <lineage>
        <taxon>Bacteria</taxon>
        <taxon>Pseudomonadati</taxon>
        <taxon>Pseudomonadota</taxon>
        <taxon>Gammaproteobacteria</taxon>
        <taxon>Enterobacterales</taxon>
        <taxon>Bruguierivoracaceae</taxon>
        <taxon>Sodalis</taxon>
    </lineage>
</organism>